<dbReference type="EC" id="2.3.2.-" evidence="2"/>
<dbReference type="EMBL" id="AB025615">
    <property type="protein sequence ID" value="BAA95746.1"/>
    <property type="molecule type" value="Genomic_DNA"/>
</dbReference>
<dbReference type="EMBL" id="CP002686">
    <property type="protein sequence ID" value="AEE77512.1"/>
    <property type="molecule type" value="Genomic_DNA"/>
</dbReference>
<dbReference type="EMBL" id="BT004596">
    <property type="protein sequence ID" value="AAO42842.1"/>
    <property type="molecule type" value="mRNA"/>
</dbReference>
<dbReference type="EMBL" id="AK227989">
    <property type="protein sequence ID" value="BAE99955.1"/>
    <property type="molecule type" value="mRNA"/>
</dbReference>
<dbReference type="EMBL" id="AY087193">
    <property type="protein sequence ID" value="AAM64749.1"/>
    <property type="molecule type" value="mRNA"/>
</dbReference>
<dbReference type="RefSeq" id="NP_189537.1">
    <property type="nucleotide sequence ID" value="NM_113816.3"/>
</dbReference>
<dbReference type="PDB" id="2JQV">
    <property type="method" value="NMR"/>
    <property type="chains" value="A=2-165"/>
</dbReference>
<dbReference type="PDBsum" id="2JQV"/>
<dbReference type="SMR" id="Q9MBH1"/>
<dbReference type="FunCoup" id="Q9MBH1">
    <property type="interactions" value="60"/>
</dbReference>
<dbReference type="PaxDb" id="3702-AT3G28950.1"/>
<dbReference type="ProteomicsDB" id="244934"/>
<dbReference type="DNASU" id="822532"/>
<dbReference type="EnsemblPlants" id="AT3G28950.1">
    <property type="protein sequence ID" value="AT3G28950.1"/>
    <property type="gene ID" value="AT3G28950"/>
</dbReference>
<dbReference type="GeneID" id="822532"/>
<dbReference type="Gramene" id="AT3G28950.1">
    <property type="protein sequence ID" value="AT3G28950.1"/>
    <property type="gene ID" value="AT3G28950"/>
</dbReference>
<dbReference type="KEGG" id="ath:AT3G28950"/>
<dbReference type="Araport" id="AT3G28950"/>
<dbReference type="TAIR" id="AT3G28950"/>
<dbReference type="eggNOG" id="ENOG502S7T1">
    <property type="taxonomic scope" value="Eukaryota"/>
</dbReference>
<dbReference type="HOGENOM" id="CLU_093936_0_0_1"/>
<dbReference type="InParanoid" id="Q9MBH1"/>
<dbReference type="OMA" id="DFEEWRV"/>
<dbReference type="OrthoDB" id="1044435at2759"/>
<dbReference type="PhylomeDB" id="Q9MBH1"/>
<dbReference type="EvolutionaryTrace" id="Q9MBH1"/>
<dbReference type="PRO" id="PR:Q9MBH1"/>
<dbReference type="Proteomes" id="UP000006548">
    <property type="component" value="Chromosome 3"/>
</dbReference>
<dbReference type="ExpressionAtlas" id="Q9MBH1">
    <property type="expression patterns" value="baseline and differential"/>
</dbReference>
<dbReference type="GO" id="GO:0016746">
    <property type="term" value="F:acyltransferase activity"/>
    <property type="evidence" value="ECO:0007669"/>
    <property type="project" value="UniProtKB-KW"/>
</dbReference>
<dbReference type="CDD" id="cd06661">
    <property type="entry name" value="GGCT_like"/>
    <property type="match status" value="1"/>
</dbReference>
<dbReference type="FunFam" id="3.10.490.10:FF:000022">
    <property type="entry name" value="Protein AIG2 B"/>
    <property type="match status" value="1"/>
</dbReference>
<dbReference type="Gene3D" id="6.10.250.210">
    <property type="match status" value="1"/>
</dbReference>
<dbReference type="Gene3D" id="3.10.490.10">
    <property type="entry name" value="Gamma-glutamyl cyclotransferase-like"/>
    <property type="match status" value="1"/>
</dbReference>
<dbReference type="InterPro" id="IPR045038">
    <property type="entry name" value="AIG2-like"/>
</dbReference>
<dbReference type="InterPro" id="IPR009288">
    <property type="entry name" value="AIG2-like_dom"/>
</dbReference>
<dbReference type="InterPro" id="IPR013024">
    <property type="entry name" value="GGCT-like"/>
</dbReference>
<dbReference type="InterPro" id="IPR036568">
    <property type="entry name" value="GGCT-like_sf"/>
</dbReference>
<dbReference type="PANTHER" id="PTHR31544">
    <property type="entry name" value="AIG2-LIKE PROTEIN D"/>
    <property type="match status" value="1"/>
</dbReference>
<dbReference type="PANTHER" id="PTHR31544:SF5">
    <property type="entry name" value="PROTEIN AIG2 C"/>
    <property type="match status" value="1"/>
</dbReference>
<dbReference type="Pfam" id="PF06094">
    <property type="entry name" value="GGACT"/>
    <property type="match status" value="1"/>
</dbReference>
<dbReference type="SUPFAM" id="SSF110857">
    <property type="entry name" value="Gamma-glutamyl cyclotransferase-like"/>
    <property type="match status" value="1"/>
</dbReference>
<keyword id="KW-0002">3D-structure</keyword>
<keyword id="KW-0012">Acyltransferase</keyword>
<keyword id="KW-1185">Reference proteome</keyword>
<keyword id="KW-0808">Transferase</keyword>
<evidence type="ECO:0000250" key="1">
    <source>
        <dbReference type="UniProtKB" id="O75223"/>
    </source>
</evidence>
<evidence type="ECO:0000305" key="2"/>
<evidence type="ECO:0000305" key="3">
    <source>
    </source>
</evidence>
<evidence type="ECO:0000312" key="4">
    <source>
        <dbReference type="Araport" id="AT3G28950"/>
    </source>
</evidence>
<evidence type="ECO:0000312" key="5">
    <source>
        <dbReference type="EMBL" id="BAA95746.1"/>
    </source>
</evidence>
<evidence type="ECO:0007829" key="6">
    <source>
        <dbReference type="PDB" id="2JQV"/>
    </source>
</evidence>
<protein>
    <recommendedName>
        <fullName evidence="2">Protein AIG2 C</fullName>
        <ecNumber evidence="2">2.3.2.-</ecNumber>
    </recommendedName>
    <alternativeName>
        <fullName evidence="2">Avirulence-induced gene 2 protein C</fullName>
    </alternativeName>
    <alternativeName>
        <fullName evidence="1">Putative gamma-glutamylcyclotransferase</fullName>
    </alternativeName>
</protein>
<reference key="1">
    <citation type="journal article" date="2000" name="DNA Res.">
        <title>Structural analysis of Arabidopsis thaliana chromosome 3. I. Sequence features of the regions of 4,504,864 bp covered by sixty P1 and TAC clones.</title>
        <authorList>
            <person name="Sato S."/>
            <person name="Nakamura Y."/>
            <person name="Kaneko T."/>
            <person name="Katoh T."/>
            <person name="Asamizu E."/>
            <person name="Tabata S."/>
        </authorList>
    </citation>
    <scope>NUCLEOTIDE SEQUENCE [LARGE SCALE GENOMIC DNA]</scope>
    <source>
        <strain>cv. Columbia</strain>
    </source>
</reference>
<reference key="2">
    <citation type="journal article" date="2017" name="Plant J.">
        <title>Araport11: a complete reannotation of the Arabidopsis thaliana reference genome.</title>
        <authorList>
            <person name="Cheng C.Y."/>
            <person name="Krishnakumar V."/>
            <person name="Chan A.P."/>
            <person name="Thibaud-Nissen F."/>
            <person name="Schobel S."/>
            <person name="Town C.D."/>
        </authorList>
    </citation>
    <scope>GENOME REANNOTATION</scope>
    <source>
        <strain>cv. Columbia</strain>
    </source>
</reference>
<reference key="3">
    <citation type="journal article" date="2003" name="Science">
        <title>Empirical analysis of transcriptional activity in the Arabidopsis genome.</title>
        <authorList>
            <person name="Yamada K."/>
            <person name="Lim J."/>
            <person name="Dale J.M."/>
            <person name="Chen H."/>
            <person name="Shinn P."/>
            <person name="Palm C.J."/>
            <person name="Southwick A.M."/>
            <person name="Wu H.C."/>
            <person name="Kim C.J."/>
            <person name="Nguyen M."/>
            <person name="Pham P.K."/>
            <person name="Cheuk R.F."/>
            <person name="Karlin-Newmann G."/>
            <person name="Liu S.X."/>
            <person name="Lam B."/>
            <person name="Sakano H."/>
            <person name="Wu T."/>
            <person name="Yu G."/>
            <person name="Miranda M."/>
            <person name="Quach H.L."/>
            <person name="Tripp M."/>
            <person name="Chang C.H."/>
            <person name="Lee J.M."/>
            <person name="Toriumi M.J."/>
            <person name="Chan M.M."/>
            <person name="Tang C.C."/>
            <person name="Onodera C.S."/>
            <person name="Deng J.M."/>
            <person name="Akiyama K."/>
            <person name="Ansari Y."/>
            <person name="Arakawa T."/>
            <person name="Banh J."/>
            <person name="Banno F."/>
            <person name="Bowser L."/>
            <person name="Brooks S.Y."/>
            <person name="Carninci P."/>
            <person name="Chao Q."/>
            <person name="Choy N."/>
            <person name="Enju A."/>
            <person name="Goldsmith A.D."/>
            <person name="Gurjal M."/>
            <person name="Hansen N.F."/>
            <person name="Hayashizaki Y."/>
            <person name="Johnson-Hopson C."/>
            <person name="Hsuan V.W."/>
            <person name="Iida K."/>
            <person name="Karnes M."/>
            <person name="Khan S."/>
            <person name="Koesema E."/>
            <person name="Ishida J."/>
            <person name="Jiang P.X."/>
            <person name="Jones T."/>
            <person name="Kawai J."/>
            <person name="Kamiya A."/>
            <person name="Meyers C."/>
            <person name="Nakajima M."/>
            <person name="Narusaka M."/>
            <person name="Seki M."/>
            <person name="Sakurai T."/>
            <person name="Satou M."/>
            <person name="Tamse R."/>
            <person name="Vaysberg M."/>
            <person name="Wallender E.K."/>
            <person name="Wong C."/>
            <person name="Yamamura Y."/>
            <person name="Yuan S."/>
            <person name="Shinozaki K."/>
            <person name="Davis R.W."/>
            <person name="Theologis A."/>
            <person name="Ecker J.R."/>
        </authorList>
    </citation>
    <scope>NUCLEOTIDE SEQUENCE [LARGE SCALE MRNA]</scope>
    <source>
        <strain>cv. Columbia</strain>
    </source>
</reference>
<reference key="4">
    <citation type="submission" date="2006-07" db="EMBL/GenBank/DDBJ databases">
        <title>Large-scale analysis of RIKEN Arabidopsis full-length (RAFL) cDNAs.</title>
        <authorList>
            <person name="Totoki Y."/>
            <person name="Seki M."/>
            <person name="Ishida J."/>
            <person name="Nakajima M."/>
            <person name="Enju A."/>
            <person name="Kamiya A."/>
            <person name="Narusaka M."/>
            <person name="Shin-i T."/>
            <person name="Nakagawa M."/>
            <person name="Sakamoto N."/>
            <person name="Oishi K."/>
            <person name="Kohara Y."/>
            <person name="Kobayashi M."/>
            <person name="Toyoda A."/>
            <person name="Sakaki Y."/>
            <person name="Sakurai T."/>
            <person name="Iida K."/>
            <person name="Akiyama K."/>
            <person name="Satou M."/>
            <person name="Toyoda T."/>
            <person name="Konagaya A."/>
            <person name="Carninci P."/>
            <person name="Kawai J."/>
            <person name="Hayashizaki Y."/>
            <person name="Shinozaki K."/>
        </authorList>
    </citation>
    <scope>NUCLEOTIDE SEQUENCE [LARGE SCALE MRNA]</scope>
    <source>
        <strain>cv. Columbia</strain>
    </source>
</reference>
<reference key="5">
    <citation type="submission" date="2002-03" db="EMBL/GenBank/DDBJ databases">
        <title>Full-length cDNA from Arabidopsis thaliana.</title>
        <authorList>
            <person name="Brover V.V."/>
            <person name="Troukhan M.E."/>
            <person name="Alexandrov N.A."/>
            <person name="Lu Y.-P."/>
            <person name="Flavell R.B."/>
            <person name="Feldmann K.A."/>
        </authorList>
    </citation>
    <scope>NUCLEOTIDE SEQUENCE [LARGE SCALE MRNA]</scope>
</reference>
<reference key="6">
    <citation type="journal article" date="2008" name="Proteins">
        <title>Solution structure of At3g28950 from Arabidopsis thaliana.</title>
        <authorList>
            <person name="de la Cruz N.B."/>
            <person name="Peterson F.C."/>
            <person name="Volkman B.F."/>
        </authorList>
    </citation>
    <scope>STRUCTURE BY NMR OF 2-165</scope>
    <scope>GENE FAMILY</scope>
</reference>
<comment type="function">
    <text evidence="1">Putative gamma-glutamylcyclotransferase.</text>
</comment>
<comment type="tissue specificity">
    <text evidence="3">Expressed in floral organs, leaves, stems and roots.</text>
</comment>
<comment type="developmental stage">
    <text evidence="3">Expressed constitutively during the life cycle.</text>
</comment>
<comment type="induction">
    <text evidence="3">Expressed constitutively.</text>
</comment>
<comment type="similarity">
    <text evidence="2">Belongs to the gamma-glutamylcyclotransferase family.</text>
</comment>
<proteinExistence type="evidence at protein level"/>
<name>AIG2C_ARATH</name>
<accession>Q9MBH1</accession>
<accession>Q8LBI2</accession>
<organism evidence="5">
    <name type="scientific">Arabidopsis thaliana</name>
    <name type="common">Mouse-ear cress</name>
    <dbReference type="NCBI Taxonomy" id="3702"/>
    <lineage>
        <taxon>Eukaryota</taxon>
        <taxon>Viridiplantae</taxon>
        <taxon>Streptophyta</taxon>
        <taxon>Embryophyta</taxon>
        <taxon>Tracheophyta</taxon>
        <taxon>Spermatophyta</taxon>
        <taxon>Magnoliopsida</taxon>
        <taxon>eudicotyledons</taxon>
        <taxon>Gunneridae</taxon>
        <taxon>Pentapetalae</taxon>
        <taxon>rosids</taxon>
        <taxon>malvids</taxon>
        <taxon>Brassicales</taxon>
        <taxon>Brassicaceae</taxon>
        <taxon>Camelineae</taxon>
        <taxon>Arabidopsis</taxon>
    </lineage>
</organism>
<gene>
    <name evidence="2" type="primary">AIG2C</name>
    <name evidence="4" type="ordered locus">At3g28950</name>
    <name evidence="5" type="ORF">K5K13.6</name>
</gene>
<feature type="chain" id="PRO_0000438021" description="Protein AIG2 C">
    <location>
        <begin position="1"/>
        <end position="165"/>
    </location>
</feature>
<feature type="active site" description="Proton acceptor" evidence="1">
    <location>
        <position position="82"/>
    </location>
</feature>
<feature type="binding site" evidence="1">
    <location>
        <begin position="14"/>
        <end position="19"/>
    </location>
    <ligand>
        <name>substrate</name>
    </ligand>
</feature>
<feature type="sequence conflict" description="In Ref. 5; AAM64749." evidence="2" ref="5">
    <original>T</original>
    <variation>S</variation>
    <location>
        <position position="106"/>
    </location>
</feature>
<feature type="strand" evidence="6">
    <location>
        <begin position="9"/>
        <end position="15"/>
    </location>
</feature>
<feature type="helix" evidence="6">
    <location>
        <begin position="20"/>
        <end position="26"/>
    </location>
</feature>
<feature type="strand" evidence="6">
    <location>
        <begin position="32"/>
        <end position="39"/>
    </location>
</feature>
<feature type="strand" evidence="6">
    <location>
        <begin position="49"/>
        <end position="51"/>
    </location>
</feature>
<feature type="strand" evidence="6">
    <location>
        <begin position="54"/>
        <end position="56"/>
    </location>
</feature>
<feature type="strand" evidence="6">
    <location>
        <begin position="59"/>
        <end position="70"/>
    </location>
</feature>
<feature type="helix" evidence="6">
    <location>
        <begin position="72"/>
        <end position="80"/>
    </location>
</feature>
<feature type="strand" evidence="6">
    <location>
        <begin position="84"/>
        <end position="95"/>
    </location>
</feature>
<feature type="turn" evidence="6">
    <location>
        <begin position="96"/>
        <end position="98"/>
    </location>
</feature>
<feature type="strand" evidence="6">
    <location>
        <begin position="101"/>
        <end position="109"/>
    </location>
</feature>
<feature type="turn" evidence="6">
    <location>
        <begin position="110"/>
        <end position="113"/>
    </location>
</feature>
<feature type="helix" evidence="6">
    <location>
        <begin position="123"/>
        <end position="146"/>
    </location>
</feature>
<feature type="helix" evidence="6">
    <location>
        <begin position="153"/>
        <end position="156"/>
    </location>
</feature>
<sequence length="165" mass="18619">MTSSDPQSHNVFVYGSILEPAVAAVILDRTADTVPAVLHGYHRYKLKGLPYPCIVSSDSGKVNGKVITGVSDAELNNFDVIEGNDYERVTVEVVRMDNSEKVKVETYVWVNKDDPRMYGEWDFEEWRVVHAEKFVETFRKMLEWNKNPNGKSMEEAVGSLLSSGD</sequence>